<protein>
    <recommendedName>
        <fullName evidence="1">ATP synthase gamma chain</fullName>
    </recommendedName>
    <alternativeName>
        <fullName evidence="1">ATP synthase F1 sector gamma subunit</fullName>
    </alternativeName>
    <alternativeName>
        <fullName evidence="1">F-ATPase gamma subunit</fullName>
    </alternativeName>
</protein>
<gene>
    <name evidence="1" type="primary">atpG</name>
    <name type="ordered locus">Hore_17810</name>
</gene>
<dbReference type="EMBL" id="CP001098">
    <property type="protein sequence ID" value="ACL70530.1"/>
    <property type="molecule type" value="Genomic_DNA"/>
</dbReference>
<dbReference type="RefSeq" id="WP_015923500.1">
    <property type="nucleotide sequence ID" value="NC_011899.1"/>
</dbReference>
<dbReference type="SMR" id="B8CZ11"/>
<dbReference type="STRING" id="373903.Hore_17810"/>
<dbReference type="KEGG" id="hor:Hore_17810"/>
<dbReference type="eggNOG" id="COG0224">
    <property type="taxonomic scope" value="Bacteria"/>
</dbReference>
<dbReference type="HOGENOM" id="CLU_050669_0_1_9"/>
<dbReference type="OrthoDB" id="9812769at2"/>
<dbReference type="Proteomes" id="UP000000719">
    <property type="component" value="Chromosome"/>
</dbReference>
<dbReference type="GO" id="GO:0005886">
    <property type="term" value="C:plasma membrane"/>
    <property type="evidence" value="ECO:0007669"/>
    <property type="project" value="UniProtKB-SubCell"/>
</dbReference>
<dbReference type="GO" id="GO:0045259">
    <property type="term" value="C:proton-transporting ATP synthase complex"/>
    <property type="evidence" value="ECO:0007669"/>
    <property type="project" value="UniProtKB-KW"/>
</dbReference>
<dbReference type="GO" id="GO:0005524">
    <property type="term" value="F:ATP binding"/>
    <property type="evidence" value="ECO:0007669"/>
    <property type="project" value="UniProtKB-UniRule"/>
</dbReference>
<dbReference type="GO" id="GO:0046933">
    <property type="term" value="F:proton-transporting ATP synthase activity, rotational mechanism"/>
    <property type="evidence" value="ECO:0007669"/>
    <property type="project" value="UniProtKB-UniRule"/>
</dbReference>
<dbReference type="GO" id="GO:0042777">
    <property type="term" value="P:proton motive force-driven plasma membrane ATP synthesis"/>
    <property type="evidence" value="ECO:0007669"/>
    <property type="project" value="UniProtKB-UniRule"/>
</dbReference>
<dbReference type="CDD" id="cd12151">
    <property type="entry name" value="F1-ATPase_gamma"/>
    <property type="match status" value="1"/>
</dbReference>
<dbReference type="FunFam" id="1.10.287.80:FF:000001">
    <property type="entry name" value="ATP synthase gamma chain"/>
    <property type="match status" value="1"/>
</dbReference>
<dbReference type="Gene3D" id="3.40.1380.10">
    <property type="match status" value="1"/>
</dbReference>
<dbReference type="Gene3D" id="1.10.287.80">
    <property type="entry name" value="ATP synthase, gamma subunit, helix hairpin domain"/>
    <property type="match status" value="1"/>
</dbReference>
<dbReference type="HAMAP" id="MF_00815">
    <property type="entry name" value="ATP_synth_gamma_bact"/>
    <property type="match status" value="1"/>
</dbReference>
<dbReference type="InterPro" id="IPR035968">
    <property type="entry name" value="ATP_synth_F1_ATPase_gsu"/>
</dbReference>
<dbReference type="InterPro" id="IPR000131">
    <property type="entry name" value="ATP_synth_F1_gsu"/>
</dbReference>
<dbReference type="InterPro" id="IPR023632">
    <property type="entry name" value="ATP_synth_F1_gsu_CS"/>
</dbReference>
<dbReference type="NCBIfam" id="TIGR01146">
    <property type="entry name" value="ATPsyn_F1gamma"/>
    <property type="match status" value="1"/>
</dbReference>
<dbReference type="PANTHER" id="PTHR11693">
    <property type="entry name" value="ATP SYNTHASE GAMMA CHAIN"/>
    <property type="match status" value="1"/>
</dbReference>
<dbReference type="PANTHER" id="PTHR11693:SF22">
    <property type="entry name" value="ATP SYNTHASE SUBUNIT GAMMA, MITOCHONDRIAL"/>
    <property type="match status" value="1"/>
</dbReference>
<dbReference type="Pfam" id="PF00231">
    <property type="entry name" value="ATP-synt"/>
    <property type="match status" value="1"/>
</dbReference>
<dbReference type="PRINTS" id="PR00126">
    <property type="entry name" value="ATPASEGAMMA"/>
</dbReference>
<dbReference type="SUPFAM" id="SSF52943">
    <property type="entry name" value="ATP synthase (F1-ATPase), gamma subunit"/>
    <property type="match status" value="1"/>
</dbReference>
<dbReference type="PROSITE" id="PS00153">
    <property type="entry name" value="ATPASE_GAMMA"/>
    <property type="match status" value="1"/>
</dbReference>
<feature type="chain" id="PRO_1000148622" description="ATP synthase gamma chain">
    <location>
        <begin position="1"/>
        <end position="287"/>
    </location>
</feature>
<proteinExistence type="inferred from homology"/>
<keyword id="KW-0066">ATP synthesis</keyword>
<keyword id="KW-1003">Cell membrane</keyword>
<keyword id="KW-0139">CF(1)</keyword>
<keyword id="KW-0375">Hydrogen ion transport</keyword>
<keyword id="KW-0406">Ion transport</keyword>
<keyword id="KW-0472">Membrane</keyword>
<keyword id="KW-1185">Reference proteome</keyword>
<keyword id="KW-0813">Transport</keyword>
<name>ATPG_HALOH</name>
<comment type="function">
    <text evidence="1">Produces ATP from ADP in the presence of a proton gradient across the membrane. The gamma chain is believed to be important in regulating ATPase activity and the flow of protons through the CF(0) complex.</text>
</comment>
<comment type="subunit">
    <text evidence="1">F-type ATPases have 2 components, CF(1) - the catalytic core - and CF(0) - the membrane proton channel. CF(1) has five subunits: alpha(3), beta(3), gamma(1), delta(1), epsilon(1). CF(0) has three main subunits: a, b and c.</text>
</comment>
<comment type="subcellular location">
    <subcellularLocation>
        <location evidence="1">Cell membrane</location>
        <topology evidence="1">Peripheral membrane protein</topology>
    </subcellularLocation>
</comment>
<comment type="similarity">
    <text evidence="1">Belongs to the ATPase gamma chain family.</text>
</comment>
<sequence length="287" mass="32554">METMRDIKRRINSIKNTQKITKAMKMVAAAKLKKAQLKAENARPFFEKTRSILIDVARRTRQKDIHPLLREKENNRSLFVMITADRGLCGAYNARVIDRVKKLTEKEDEVNFLAVGRKGRDFFGKRGYNIISEYINIDDYPDYSLAGKIGEEIISLFLDDVVDRVVLVYTYFNSAISQEVRDLTLLPLTPPDDKNQEEGKINTEYLYEPSPEAVMDILLPSYIKNILYSALIEAKASEFGARMTAMDAATDNAGELIDKLTLSYNRARQAAITKEITEIVGGAEALK</sequence>
<organism>
    <name type="scientific">Halothermothrix orenii (strain H 168 / OCM 544 / DSM 9562)</name>
    <dbReference type="NCBI Taxonomy" id="373903"/>
    <lineage>
        <taxon>Bacteria</taxon>
        <taxon>Bacillati</taxon>
        <taxon>Bacillota</taxon>
        <taxon>Clostridia</taxon>
        <taxon>Halanaerobiales</taxon>
        <taxon>Halothermotrichaceae</taxon>
        <taxon>Halothermothrix</taxon>
    </lineage>
</organism>
<evidence type="ECO:0000255" key="1">
    <source>
        <dbReference type="HAMAP-Rule" id="MF_00815"/>
    </source>
</evidence>
<accession>B8CZ11</accession>
<reference key="1">
    <citation type="journal article" date="2009" name="PLoS ONE">
        <title>Genome analysis of the anaerobic thermohalophilic bacterium Halothermothrix orenii.</title>
        <authorList>
            <person name="Mavromatis K."/>
            <person name="Ivanova N."/>
            <person name="Anderson I."/>
            <person name="Lykidis A."/>
            <person name="Hooper S.D."/>
            <person name="Sun H."/>
            <person name="Kunin V."/>
            <person name="Lapidus A."/>
            <person name="Hugenholtz P."/>
            <person name="Patel B."/>
            <person name="Kyrpides N.C."/>
        </authorList>
    </citation>
    <scope>NUCLEOTIDE SEQUENCE [LARGE SCALE GENOMIC DNA]</scope>
    <source>
        <strain>H 168 / OCM 544 / DSM 9562</strain>
    </source>
</reference>